<comment type="catalytic activity">
    <reaction>
        <text>(R)-pantothenate + ATP = (R)-4'-phosphopantothenate + ADP + H(+)</text>
        <dbReference type="Rhea" id="RHEA:16373"/>
        <dbReference type="ChEBI" id="CHEBI:10986"/>
        <dbReference type="ChEBI" id="CHEBI:15378"/>
        <dbReference type="ChEBI" id="CHEBI:29032"/>
        <dbReference type="ChEBI" id="CHEBI:30616"/>
        <dbReference type="ChEBI" id="CHEBI:456216"/>
        <dbReference type="EC" id="2.7.1.33"/>
    </reaction>
</comment>
<comment type="pathway">
    <text>Cofactor biosynthesis; coenzyme A biosynthesis; CoA from (R)-pantothenate: step 1/5.</text>
</comment>
<comment type="subcellular location">
    <subcellularLocation>
        <location evidence="1">Cytoplasm</location>
    </subcellularLocation>
</comment>
<comment type="similarity">
    <text evidence="3">Belongs to the prokaryotic pantothenate kinase family.</text>
</comment>
<dbReference type="EC" id="2.7.1.33"/>
<dbReference type="EMBL" id="AE004439">
    <property type="protein sequence ID" value="AAK03831.1"/>
    <property type="molecule type" value="Genomic_DNA"/>
</dbReference>
<dbReference type="RefSeq" id="WP_010907311.1">
    <property type="nucleotide sequence ID" value="NC_002663.1"/>
</dbReference>
<dbReference type="SMR" id="P57967"/>
<dbReference type="STRING" id="272843.PM1747"/>
<dbReference type="EnsemblBacteria" id="AAK03831">
    <property type="protein sequence ID" value="AAK03831"/>
    <property type="gene ID" value="PM1747"/>
</dbReference>
<dbReference type="KEGG" id="pmu:PM1747"/>
<dbReference type="HOGENOM" id="CLU_053818_1_1_6"/>
<dbReference type="OrthoDB" id="1550976at2"/>
<dbReference type="UniPathway" id="UPA00241">
    <property type="reaction ID" value="UER00352"/>
</dbReference>
<dbReference type="Proteomes" id="UP000000809">
    <property type="component" value="Chromosome"/>
</dbReference>
<dbReference type="GO" id="GO:0005737">
    <property type="term" value="C:cytoplasm"/>
    <property type="evidence" value="ECO:0007669"/>
    <property type="project" value="UniProtKB-SubCell"/>
</dbReference>
<dbReference type="GO" id="GO:0005524">
    <property type="term" value="F:ATP binding"/>
    <property type="evidence" value="ECO:0007669"/>
    <property type="project" value="UniProtKB-UniRule"/>
</dbReference>
<dbReference type="GO" id="GO:0004594">
    <property type="term" value="F:pantothenate kinase activity"/>
    <property type="evidence" value="ECO:0007669"/>
    <property type="project" value="UniProtKB-UniRule"/>
</dbReference>
<dbReference type="GO" id="GO:0015937">
    <property type="term" value="P:coenzyme A biosynthetic process"/>
    <property type="evidence" value="ECO:0007669"/>
    <property type="project" value="UniProtKB-UniRule"/>
</dbReference>
<dbReference type="CDD" id="cd02025">
    <property type="entry name" value="PanK"/>
    <property type="match status" value="1"/>
</dbReference>
<dbReference type="FunFam" id="3.40.50.300:FF:000242">
    <property type="entry name" value="Pantothenate kinase"/>
    <property type="match status" value="1"/>
</dbReference>
<dbReference type="Gene3D" id="3.40.50.300">
    <property type="entry name" value="P-loop containing nucleotide triphosphate hydrolases"/>
    <property type="match status" value="1"/>
</dbReference>
<dbReference type="HAMAP" id="MF_00215">
    <property type="entry name" value="Pantothen_kinase_1"/>
    <property type="match status" value="1"/>
</dbReference>
<dbReference type="InterPro" id="IPR027417">
    <property type="entry name" value="P-loop_NTPase"/>
</dbReference>
<dbReference type="InterPro" id="IPR004566">
    <property type="entry name" value="PanK"/>
</dbReference>
<dbReference type="InterPro" id="IPR006083">
    <property type="entry name" value="PRK/URK"/>
</dbReference>
<dbReference type="NCBIfam" id="TIGR00554">
    <property type="entry name" value="panK_bact"/>
    <property type="match status" value="1"/>
</dbReference>
<dbReference type="PANTHER" id="PTHR10285">
    <property type="entry name" value="URIDINE KINASE"/>
    <property type="match status" value="1"/>
</dbReference>
<dbReference type="Pfam" id="PF00485">
    <property type="entry name" value="PRK"/>
    <property type="match status" value="1"/>
</dbReference>
<dbReference type="PIRSF" id="PIRSF000545">
    <property type="entry name" value="Pantothenate_kin"/>
    <property type="match status" value="1"/>
</dbReference>
<dbReference type="SUPFAM" id="SSF52540">
    <property type="entry name" value="P-loop containing nucleoside triphosphate hydrolases"/>
    <property type="match status" value="1"/>
</dbReference>
<evidence type="ECO:0000250" key="1"/>
<evidence type="ECO:0000255" key="2"/>
<evidence type="ECO:0000305" key="3"/>
<protein>
    <recommendedName>
        <fullName>Pantothenate kinase</fullName>
        <ecNumber>2.7.1.33</ecNumber>
    </recommendedName>
    <alternativeName>
        <fullName>Pantothenic acid kinase</fullName>
    </alternativeName>
</protein>
<gene>
    <name type="primary">coaA</name>
    <name type="ordered locus">PM1747</name>
</gene>
<feature type="chain" id="PRO_0000194441" description="Pantothenate kinase">
    <location>
        <begin position="1"/>
        <end position="316"/>
    </location>
</feature>
<feature type="binding site" evidence="2">
    <location>
        <begin position="99"/>
        <end position="106"/>
    </location>
    <ligand>
        <name>ATP</name>
        <dbReference type="ChEBI" id="CHEBI:30616"/>
    </ligand>
</feature>
<sequence>MDLTNSTFLSNQLTPFLSFSREQWAELRKSVPLTLTEQDLKPLLGINEELSLDEVRTIYLPLVRLINYYIEERIQRQQVMNRFLGVNPDKVPYIISIAGSVAVGKSTSARILQSLLSQWPERRKVDLITTDGFLYPLAKLQQDNLLHKKGFPVSYDTARLVRFLADIKSGKPKVSAPVYSHLIYDIVPDQFDVVDQPDILILEGLNVLQTGDRSSQTFVSDFVDFSIYVDADEDLLKAWYISRFLKFRQSAFSDPNSYFKHYATLSEPEAISTAGRIWDEINGLNLRENILPTRERANLILTKGTDHAVELVKLRK</sequence>
<reference key="1">
    <citation type="journal article" date="2001" name="Proc. Natl. Acad. Sci. U.S.A.">
        <title>Complete genomic sequence of Pasteurella multocida Pm70.</title>
        <authorList>
            <person name="May B.J."/>
            <person name="Zhang Q."/>
            <person name="Li L.L."/>
            <person name="Paustian M.L."/>
            <person name="Whittam T.S."/>
            <person name="Kapur V."/>
        </authorList>
    </citation>
    <scope>NUCLEOTIDE SEQUENCE [LARGE SCALE GENOMIC DNA]</scope>
    <source>
        <strain>Pm70</strain>
    </source>
</reference>
<proteinExistence type="inferred from homology"/>
<name>COAA_PASMU</name>
<accession>P57967</accession>
<organism>
    <name type="scientific">Pasteurella multocida (strain Pm70)</name>
    <dbReference type="NCBI Taxonomy" id="272843"/>
    <lineage>
        <taxon>Bacteria</taxon>
        <taxon>Pseudomonadati</taxon>
        <taxon>Pseudomonadota</taxon>
        <taxon>Gammaproteobacteria</taxon>
        <taxon>Pasteurellales</taxon>
        <taxon>Pasteurellaceae</taxon>
        <taxon>Pasteurella</taxon>
    </lineage>
</organism>
<keyword id="KW-0067">ATP-binding</keyword>
<keyword id="KW-0173">Coenzyme A biosynthesis</keyword>
<keyword id="KW-0963">Cytoplasm</keyword>
<keyword id="KW-0418">Kinase</keyword>
<keyword id="KW-0547">Nucleotide-binding</keyword>
<keyword id="KW-1185">Reference proteome</keyword>
<keyword id="KW-0808">Transferase</keyword>